<gene>
    <name evidence="1" type="primary">fadA</name>
    <name type="ordered locus">ASA_4251</name>
</gene>
<accession>A4STF3</accession>
<keyword id="KW-0012">Acyltransferase</keyword>
<keyword id="KW-0963">Cytoplasm</keyword>
<keyword id="KW-0276">Fatty acid metabolism</keyword>
<keyword id="KW-0442">Lipid degradation</keyword>
<keyword id="KW-0443">Lipid metabolism</keyword>
<keyword id="KW-0808">Transferase</keyword>
<organism>
    <name type="scientific">Aeromonas salmonicida (strain A449)</name>
    <dbReference type="NCBI Taxonomy" id="382245"/>
    <lineage>
        <taxon>Bacteria</taxon>
        <taxon>Pseudomonadati</taxon>
        <taxon>Pseudomonadota</taxon>
        <taxon>Gammaproteobacteria</taxon>
        <taxon>Aeromonadales</taxon>
        <taxon>Aeromonadaceae</taxon>
        <taxon>Aeromonas</taxon>
    </lineage>
</organism>
<feature type="chain" id="PRO_0000292885" description="3-ketoacyl-CoA thiolase">
    <location>
        <begin position="1"/>
        <end position="387"/>
    </location>
</feature>
<feature type="active site" description="Acyl-thioester intermediate" evidence="1">
    <location>
        <position position="91"/>
    </location>
</feature>
<feature type="active site" description="Proton acceptor" evidence="1">
    <location>
        <position position="343"/>
    </location>
</feature>
<feature type="active site" description="Proton acceptor" evidence="1">
    <location>
        <position position="373"/>
    </location>
</feature>
<reference key="1">
    <citation type="journal article" date="2008" name="BMC Genomics">
        <title>The genome of Aeromonas salmonicida subsp. salmonicida A449: insights into the evolution of a fish pathogen.</title>
        <authorList>
            <person name="Reith M.E."/>
            <person name="Singh R.K."/>
            <person name="Curtis B."/>
            <person name="Boyd J.M."/>
            <person name="Bouevitch A."/>
            <person name="Kimball J."/>
            <person name="Munholland J."/>
            <person name="Murphy C."/>
            <person name="Sarty D."/>
            <person name="Williams J."/>
            <person name="Nash J.H."/>
            <person name="Johnson S.C."/>
            <person name="Brown L.L."/>
        </authorList>
    </citation>
    <scope>NUCLEOTIDE SEQUENCE [LARGE SCALE GENOMIC DNA]</scope>
    <source>
        <strain>A449</strain>
    </source>
</reference>
<protein>
    <recommendedName>
        <fullName evidence="1">3-ketoacyl-CoA thiolase</fullName>
        <ecNumber evidence="1">2.3.1.16</ecNumber>
    </recommendedName>
    <alternativeName>
        <fullName evidence="1">Acetyl-CoA acyltransferase</fullName>
    </alternativeName>
    <alternativeName>
        <fullName evidence="1">Beta-ketothiolase</fullName>
    </alternativeName>
    <alternativeName>
        <fullName evidence="1">Fatty acid oxidation complex subunit beta</fullName>
    </alternativeName>
</protein>
<evidence type="ECO:0000255" key="1">
    <source>
        <dbReference type="HAMAP-Rule" id="MF_01620"/>
    </source>
</evidence>
<dbReference type="EC" id="2.3.1.16" evidence="1"/>
<dbReference type="EMBL" id="CP000644">
    <property type="protein sequence ID" value="ABO92175.1"/>
    <property type="molecule type" value="Genomic_DNA"/>
</dbReference>
<dbReference type="SMR" id="A4STF3"/>
<dbReference type="STRING" id="29491.GCA_000820065_02846"/>
<dbReference type="KEGG" id="asa:ASA_4251"/>
<dbReference type="eggNOG" id="COG0183">
    <property type="taxonomic scope" value="Bacteria"/>
</dbReference>
<dbReference type="HOGENOM" id="CLU_031026_2_3_6"/>
<dbReference type="UniPathway" id="UPA00659"/>
<dbReference type="Proteomes" id="UP000000225">
    <property type="component" value="Chromosome"/>
</dbReference>
<dbReference type="GO" id="GO:0005737">
    <property type="term" value="C:cytoplasm"/>
    <property type="evidence" value="ECO:0007669"/>
    <property type="project" value="UniProtKB-SubCell"/>
</dbReference>
<dbReference type="GO" id="GO:0003988">
    <property type="term" value="F:acetyl-CoA C-acyltransferase activity"/>
    <property type="evidence" value="ECO:0007669"/>
    <property type="project" value="UniProtKB-UniRule"/>
</dbReference>
<dbReference type="GO" id="GO:0006635">
    <property type="term" value="P:fatty acid beta-oxidation"/>
    <property type="evidence" value="ECO:0007669"/>
    <property type="project" value="UniProtKB-UniRule"/>
</dbReference>
<dbReference type="GO" id="GO:0010124">
    <property type="term" value="P:phenylacetate catabolic process"/>
    <property type="evidence" value="ECO:0007669"/>
    <property type="project" value="TreeGrafter"/>
</dbReference>
<dbReference type="CDD" id="cd00751">
    <property type="entry name" value="thiolase"/>
    <property type="match status" value="1"/>
</dbReference>
<dbReference type="FunFam" id="3.40.47.10:FF:000010">
    <property type="entry name" value="Acetyl-CoA acetyltransferase (Thiolase)"/>
    <property type="match status" value="1"/>
</dbReference>
<dbReference type="Gene3D" id="3.40.47.10">
    <property type="match status" value="2"/>
</dbReference>
<dbReference type="HAMAP" id="MF_01620">
    <property type="entry name" value="FadA"/>
    <property type="match status" value="1"/>
</dbReference>
<dbReference type="InterPro" id="IPR012805">
    <property type="entry name" value="FadA"/>
</dbReference>
<dbReference type="InterPro" id="IPR002155">
    <property type="entry name" value="Thiolase"/>
</dbReference>
<dbReference type="InterPro" id="IPR016039">
    <property type="entry name" value="Thiolase-like"/>
</dbReference>
<dbReference type="InterPro" id="IPR050215">
    <property type="entry name" value="Thiolase-like_sf_Thiolase"/>
</dbReference>
<dbReference type="InterPro" id="IPR020615">
    <property type="entry name" value="Thiolase_acyl_enz_int_AS"/>
</dbReference>
<dbReference type="InterPro" id="IPR020610">
    <property type="entry name" value="Thiolase_AS"/>
</dbReference>
<dbReference type="InterPro" id="IPR020617">
    <property type="entry name" value="Thiolase_C"/>
</dbReference>
<dbReference type="InterPro" id="IPR020613">
    <property type="entry name" value="Thiolase_CS"/>
</dbReference>
<dbReference type="InterPro" id="IPR020616">
    <property type="entry name" value="Thiolase_N"/>
</dbReference>
<dbReference type="NCBIfam" id="TIGR01930">
    <property type="entry name" value="AcCoA-C-Actrans"/>
    <property type="match status" value="1"/>
</dbReference>
<dbReference type="NCBIfam" id="TIGR02445">
    <property type="entry name" value="fadA"/>
    <property type="match status" value="1"/>
</dbReference>
<dbReference type="NCBIfam" id="NF006510">
    <property type="entry name" value="PRK08947.1"/>
    <property type="match status" value="1"/>
</dbReference>
<dbReference type="PANTHER" id="PTHR43853:SF11">
    <property type="entry name" value="3-KETOACYL-COA THIOLASE FADA"/>
    <property type="match status" value="1"/>
</dbReference>
<dbReference type="PANTHER" id="PTHR43853">
    <property type="entry name" value="3-KETOACYL-COA THIOLASE, PEROXISOMAL"/>
    <property type="match status" value="1"/>
</dbReference>
<dbReference type="Pfam" id="PF02803">
    <property type="entry name" value="Thiolase_C"/>
    <property type="match status" value="1"/>
</dbReference>
<dbReference type="Pfam" id="PF00108">
    <property type="entry name" value="Thiolase_N"/>
    <property type="match status" value="1"/>
</dbReference>
<dbReference type="PIRSF" id="PIRSF000429">
    <property type="entry name" value="Ac-CoA_Ac_transf"/>
    <property type="match status" value="1"/>
</dbReference>
<dbReference type="SUPFAM" id="SSF53901">
    <property type="entry name" value="Thiolase-like"/>
    <property type="match status" value="2"/>
</dbReference>
<dbReference type="PROSITE" id="PS00098">
    <property type="entry name" value="THIOLASE_1"/>
    <property type="match status" value="1"/>
</dbReference>
<dbReference type="PROSITE" id="PS00737">
    <property type="entry name" value="THIOLASE_2"/>
    <property type="match status" value="1"/>
</dbReference>
<dbReference type="PROSITE" id="PS00099">
    <property type="entry name" value="THIOLASE_3"/>
    <property type="match status" value="1"/>
</dbReference>
<proteinExistence type="inferred from homology"/>
<sequence length="387" mass="40976">MKDVVIVDCIRTPMGRSKGGAFRNVRAEDLSAHLMSSILLRNPNLDPNEIEDIYWGCVQQTLEQGFNIARNAALLAGIPKQVGAVTVNRLCGSSMQALHDASRAIQVGDGDIFIIGGVEHMGHVPMSHGVDFHPGMAKSVAKASGMMGLTAEMLGKLHGISRQQQDEFAARSHRRAYAATVEGRFAREIVGLEGHDASGARFFYDYDEVIRPETTVETLSQLRPVFDPVNGTVTAGTSSALSDGASAMLVMSADRAKALGLTPRVRVRSMAVAGCDAAIMGYGPVPATQKALKRAGLTIGDIDLVELNEAFAAQSLPCVKDLGLLDVAEEKVNLNGGAIALGHPLGCSGSRISTTLIHLMEEKDANLGLATMCIGLGQGIATVFERV</sequence>
<comment type="function">
    <text evidence="1">Catalyzes the final step of fatty acid oxidation in which acetyl-CoA is released and the CoA ester of a fatty acid two carbons shorter is formed.</text>
</comment>
<comment type="catalytic activity">
    <reaction evidence="1">
        <text>an acyl-CoA + acetyl-CoA = a 3-oxoacyl-CoA + CoA</text>
        <dbReference type="Rhea" id="RHEA:21564"/>
        <dbReference type="ChEBI" id="CHEBI:57287"/>
        <dbReference type="ChEBI" id="CHEBI:57288"/>
        <dbReference type="ChEBI" id="CHEBI:58342"/>
        <dbReference type="ChEBI" id="CHEBI:90726"/>
        <dbReference type="EC" id="2.3.1.16"/>
    </reaction>
</comment>
<comment type="pathway">
    <text evidence="1">Lipid metabolism; fatty acid beta-oxidation.</text>
</comment>
<comment type="subunit">
    <text evidence="1">Heterotetramer of two alpha chains (FadB) and two beta chains (FadA).</text>
</comment>
<comment type="subcellular location">
    <subcellularLocation>
        <location evidence="1">Cytoplasm</location>
    </subcellularLocation>
</comment>
<comment type="similarity">
    <text evidence="1">Belongs to the thiolase-like superfamily. Thiolase family.</text>
</comment>
<name>FADA_AERS4</name>